<gene>
    <name type="primary">ydzR</name>
    <name type="ordered locus">BSU05529</name>
</gene>
<comment type="similarity">
    <text evidence="1">Belongs to the GerPA/GerPF family.</text>
</comment>
<dbReference type="EMBL" id="AL009126">
    <property type="protein sequence ID" value="CAX52560.1"/>
    <property type="molecule type" value="Genomic_DNA"/>
</dbReference>
<dbReference type="RefSeq" id="WP_003244212.1">
    <property type="nucleotide sequence ID" value="NZ_OZ025638.1"/>
</dbReference>
<dbReference type="RefSeq" id="YP_003097687.1">
    <property type="nucleotide sequence ID" value="NC_000964.3"/>
</dbReference>
<dbReference type="FunCoup" id="C0H3W2">
    <property type="interactions" value="7"/>
</dbReference>
<dbReference type="STRING" id="224308.BSU05529"/>
<dbReference type="PaxDb" id="224308-BSU05529"/>
<dbReference type="EnsemblBacteria" id="CAX52560">
    <property type="protein sequence ID" value="CAX52560"/>
    <property type="gene ID" value="BSU_05529"/>
</dbReference>
<dbReference type="GeneID" id="8303211"/>
<dbReference type="KEGG" id="bsu:BSU05529"/>
<dbReference type="PATRIC" id="fig|224308.179.peg.594"/>
<dbReference type="InParanoid" id="C0H3W2"/>
<dbReference type="OrthoDB" id="2914746at2"/>
<dbReference type="BioCyc" id="BSUB:BSU05529-MONOMER"/>
<dbReference type="Proteomes" id="UP000001570">
    <property type="component" value="Chromosome"/>
</dbReference>
<dbReference type="InterPro" id="IPR019618">
    <property type="entry name" value="Spore_germination_GerPA"/>
</dbReference>
<dbReference type="PANTHER" id="PTHR37808:SF1">
    <property type="entry name" value="SPORE GERMINATION PROTEIN-LIKE PROTEIN YDZR"/>
    <property type="match status" value="1"/>
</dbReference>
<dbReference type="PANTHER" id="PTHR37808">
    <property type="entry name" value="SPORE GERMINATION PROTEIN-LIKE PROTEIN YDZR-RELATED"/>
    <property type="match status" value="1"/>
</dbReference>
<dbReference type="Pfam" id="PF10676">
    <property type="entry name" value="gerPA"/>
    <property type="match status" value="1"/>
</dbReference>
<protein>
    <recommendedName>
        <fullName>Spore germination protein-like protein YdzR</fullName>
    </recommendedName>
</protein>
<evidence type="ECO:0000305" key="1"/>
<organism>
    <name type="scientific">Bacillus subtilis (strain 168)</name>
    <dbReference type="NCBI Taxonomy" id="224308"/>
    <lineage>
        <taxon>Bacteria</taxon>
        <taxon>Bacillati</taxon>
        <taxon>Bacillota</taxon>
        <taxon>Bacilli</taxon>
        <taxon>Bacillales</taxon>
        <taxon>Bacillaceae</taxon>
        <taxon>Bacillus</taxon>
    </lineage>
</organism>
<keyword id="KW-1185">Reference proteome</keyword>
<reference key="1">
    <citation type="journal article" date="1997" name="Nature">
        <title>The complete genome sequence of the Gram-positive bacterium Bacillus subtilis.</title>
        <authorList>
            <person name="Kunst F."/>
            <person name="Ogasawara N."/>
            <person name="Moszer I."/>
            <person name="Albertini A.M."/>
            <person name="Alloni G."/>
            <person name="Azevedo V."/>
            <person name="Bertero M.G."/>
            <person name="Bessieres P."/>
            <person name="Bolotin A."/>
            <person name="Borchert S."/>
            <person name="Borriss R."/>
            <person name="Boursier L."/>
            <person name="Brans A."/>
            <person name="Braun M."/>
            <person name="Brignell S.C."/>
            <person name="Bron S."/>
            <person name="Brouillet S."/>
            <person name="Bruschi C.V."/>
            <person name="Caldwell B."/>
            <person name="Capuano V."/>
            <person name="Carter N.M."/>
            <person name="Choi S.-K."/>
            <person name="Codani J.-J."/>
            <person name="Connerton I.F."/>
            <person name="Cummings N.J."/>
            <person name="Daniel R.A."/>
            <person name="Denizot F."/>
            <person name="Devine K.M."/>
            <person name="Duesterhoeft A."/>
            <person name="Ehrlich S.D."/>
            <person name="Emmerson P.T."/>
            <person name="Entian K.-D."/>
            <person name="Errington J."/>
            <person name="Fabret C."/>
            <person name="Ferrari E."/>
            <person name="Foulger D."/>
            <person name="Fritz C."/>
            <person name="Fujita M."/>
            <person name="Fujita Y."/>
            <person name="Fuma S."/>
            <person name="Galizzi A."/>
            <person name="Galleron N."/>
            <person name="Ghim S.-Y."/>
            <person name="Glaser P."/>
            <person name="Goffeau A."/>
            <person name="Golightly E.J."/>
            <person name="Grandi G."/>
            <person name="Guiseppi G."/>
            <person name="Guy B.J."/>
            <person name="Haga K."/>
            <person name="Haiech J."/>
            <person name="Harwood C.R."/>
            <person name="Henaut A."/>
            <person name="Hilbert H."/>
            <person name="Holsappel S."/>
            <person name="Hosono S."/>
            <person name="Hullo M.-F."/>
            <person name="Itaya M."/>
            <person name="Jones L.-M."/>
            <person name="Joris B."/>
            <person name="Karamata D."/>
            <person name="Kasahara Y."/>
            <person name="Klaerr-Blanchard M."/>
            <person name="Klein C."/>
            <person name="Kobayashi Y."/>
            <person name="Koetter P."/>
            <person name="Koningstein G."/>
            <person name="Krogh S."/>
            <person name="Kumano M."/>
            <person name="Kurita K."/>
            <person name="Lapidus A."/>
            <person name="Lardinois S."/>
            <person name="Lauber J."/>
            <person name="Lazarevic V."/>
            <person name="Lee S.-M."/>
            <person name="Levine A."/>
            <person name="Liu H."/>
            <person name="Masuda S."/>
            <person name="Mauel C."/>
            <person name="Medigue C."/>
            <person name="Medina N."/>
            <person name="Mellado R.P."/>
            <person name="Mizuno M."/>
            <person name="Moestl D."/>
            <person name="Nakai S."/>
            <person name="Noback M."/>
            <person name="Noone D."/>
            <person name="O'Reilly M."/>
            <person name="Ogawa K."/>
            <person name="Ogiwara A."/>
            <person name="Oudega B."/>
            <person name="Park S.-H."/>
            <person name="Parro V."/>
            <person name="Pohl T.M."/>
            <person name="Portetelle D."/>
            <person name="Porwollik S."/>
            <person name="Prescott A.M."/>
            <person name="Presecan E."/>
            <person name="Pujic P."/>
            <person name="Purnelle B."/>
            <person name="Rapoport G."/>
            <person name="Rey M."/>
            <person name="Reynolds S."/>
            <person name="Rieger M."/>
            <person name="Rivolta C."/>
            <person name="Rocha E."/>
            <person name="Roche B."/>
            <person name="Rose M."/>
            <person name="Sadaie Y."/>
            <person name="Sato T."/>
            <person name="Scanlan E."/>
            <person name="Schleich S."/>
            <person name="Schroeter R."/>
            <person name="Scoffone F."/>
            <person name="Sekiguchi J."/>
            <person name="Sekowska A."/>
            <person name="Seror S.J."/>
            <person name="Serror P."/>
            <person name="Shin B.-S."/>
            <person name="Soldo B."/>
            <person name="Sorokin A."/>
            <person name="Tacconi E."/>
            <person name="Takagi T."/>
            <person name="Takahashi H."/>
            <person name="Takemaru K."/>
            <person name="Takeuchi M."/>
            <person name="Tamakoshi A."/>
            <person name="Tanaka T."/>
            <person name="Terpstra P."/>
            <person name="Tognoni A."/>
            <person name="Tosato V."/>
            <person name="Uchiyama S."/>
            <person name="Vandenbol M."/>
            <person name="Vannier F."/>
            <person name="Vassarotti A."/>
            <person name="Viari A."/>
            <person name="Wambutt R."/>
            <person name="Wedler E."/>
            <person name="Wedler H."/>
            <person name="Weitzenegger T."/>
            <person name="Winters P."/>
            <person name="Wipat A."/>
            <person name="Yamamoto H."/>
            <person name="Yamane K."/>
            <person name="Yasumoto K."/>
            <person name="Yata K."/>
            <person name="Yoshida K."/>
            <person name="Yoshikawa H.-F."/>
            <person name="Zumstein E."/>
            <person name="Yoshikawa H."/>
            <person name="Danchin A."/>
        </authorList>
    </citation>
    <scope>NUCLEOTIDE SEQUENCE [LARGE SCALE GENOMIC DNA]</scope>
    <source>
        <strain>168</strain>
    </source>
</reference>
<accession>C0H3W2</accession>
<proteinExistence type="inferred from homology"/>
<name>YDZR_BACSU</name>
<feature type="chain" id="PRO_0000387938" description="Spore germination protein-like protein YdzR">
    <location>
        <begin position="1"/>
        <end position="76"/>
    </location>
</feature>
<sequence>MMKFPVYIHSISGNSVFNNGFAVSISPFSVSKTTEGSGGSNTGLVFESNALSQTSSANQAQNVTYAIQELLSKLLA</sequence>